<proteinExistence type="inferred from homology"/>
<gene>
    <name evidence="1" type="primary">psaJ</name>
    <name type="ordered locus">CsCp062</name>
</gene>
<accession>Q2QD69</accession>
<accession>A5J1V4</accession>
<accession>Q4VZJ7</accession>
<sequence>MRDLKTYLSVAPVVSTIWFGALAGLLIEINRLFPDALVFPFFSF</sequence>
<evidence type="ECO:0000255" key="1">
    <source>
        <dbReference type="HAMAP-Rule" id="MF_00522"/>
    </source>
</evidence>
<evidence type="ECO:0000305" key="2"/>
<name>PSAJ_CUCSA</name>
<geneLocation type="chloroplast"/>
<keyword id="KW-0150">Chloroplast</keyword>
<keyword id="KW-0472">Membrane</keyword>
<keyword id="KW-0602">Photosynthesis</keyword>
<keyword id="KW-0603">Photosystem I</keyword>
<keyword id="KW-0934">Plastid</keyword>
<keyword id="KW-0793">Thylakoid</keyword>
<keyword id="KW-0812">Transmembrane</keyword>
<keyword id="KW-1133">Transmembrane helix</keyword>
<protein>
    <recommendedName>
        <fullName evidence="1">Photosystem I reaction center subunit IX</fullName>
    </recommendedName>
    <alternativeName>
        <fullName evidence="1">PSI-J</fullName>
    </alternativeName>
</protein>
<feature type="chain" id="PRO_0000276053" description="Photosystem I reaction center subunit IX">
    <location>
        <begin position="1"/>
        <end position="44"/>
    </location>
</feature>
<feature type="transmembrane region" description="Helical" evidence="1">
    <location>
        <begin position="7"/>
        <end position="27"/>
    </location>
</feature>
<feature type="sequence conflict" description="In Ref. 2; CAJ00778." evidence="2" ref="2">
    <original>YLS</original>
    <variation>FSP</variation>
    <location>
        <begin position="7"/>
        <end position="9"/>
    </location>
</feature>
<feature type="sequence conflict" description="In Ref. 2; CAJ00778." evidence="2" ref="2">
    <original>FGALAGLLIEINRLFPDALVFPFFSF</original>
    <variation>SGFSGSINRDQSFIPGCVGIPIFSI</variation>
    <location>
        <begin position="19"/>
        <end position="44"/>
    </location>
</feature>
<comment type="function">
    <text evidence="1">May help in the organization of the PsaE and PsaF subunits.</text>
</comment>
<comment type="subcellular location">
    <subcellularLocation>
        <location evidence="1">Plastid</location>
        <location evidence="1">Chloroplast thylakoid membrane</location>
        <topology evidence="1">Single-pass membrane protein</topology>
    </subcellularLocation>
</comment>
<comment type="similarity">
    <text evidence="1">Belongs to the PsaJ family.</text>
</comment>
<reference key="1">
    <citation type="journal article" date="2006" name="Plant Cell Rep.">
        <title>Complete sequence and organization of the cucumber (Cucumis sativus L. cv. Baekmibaekdadagi) chloroplast genome.</title>
        <authorList>
            <person name="Kim J.-S."/>
            <person name="Jung J.D."/>
            <person name="Lee J.-A."/>
            <person name="Park H.-W."/>
            <person name="Oh K.-H."/>
            <person name="Jeong W.J."/>
            <person name="Choi D.-W."/>
            <person name="Liu J.R."/>
            <person name="Cho K.Y."/>
        </authorList>
    </citation>
    <scope>NUCLEOTIDE SEQUENCE [LARGE SCALE GENOMIC DNA]</scope>
    <source>
        <strain>cv. Baekmibaekdadagi</strain>
    </source>
</reference>
<reference key="2">
    <citation type="journal article" date="2007" name="Cell. Mol. Biol. Lett.">
        <title>The complete structure of the cucumber (Cucumis sativus L.) chloroplast genome: its composition and comparative analysis.</title>
        <authorList>
            <person name="Plader W.W."/>
            <person name="Yukawa Y."/>
            <person name="Sugiura M."/>
            <person name="Malepszy S."/>
        </authorList>
    </citation>
    <scope>NUCLEOTIDE SEQUENCE [LARGE SCALE GENOMIC DNA]</scope>
    <source>
        <strain>cv. Borszczagowski</strain>
    </source>
</reference>
<reference key="3">
    <citation type="journal article" date="2007" name="Genome">
        <title>Sequencing cucumber (Cucumis sativus L.) chloroplast genomes identifies differences between chilling-tolerant and -susceptible cucumber lines.</title>
        <authorList>
            <person name="Chung S.-M."/>
            <person name="Gordon V.S."/>
            <person name="Staub J.E."/>
        </authorList>
    </citation>
    <scope>NUCLEOTIDE SEQUENCE [LARGE SCALE GENOMIC DNA]</scope>
    <source>
        <strain>cv. Chipper</strain>
        <strain>cv. Gy14</strain>
    </source>
</reference>
<dbReference type="EMBL" id="DQ119058">
    <property type="protein sequence ID" value="AAZ94671.1"/>
    <property type="molecule type" value="Genomic_DNA"/>
</dbReference>
<dbReference type="EMBL" id="AJ970307">
    <property type="protein sequence ID" value="CAJ00778.1"/>
    <property type="molecule type" value="Genomic_DNA"/>
</dbReference>
<dbReference type="EMBL" id="DQ865975">
    <property type="protein sequence ID" value="ABI97437.1"/>
    <property type="molecule type" value="Genomic_DNA"/>
</dbReference>
<dbReference type="EMBL" id="DQ865976">
    <property type="protein sequence ID" value="ABI98765.1"/>
    <property type="molecule type" value="Genomic_DNA"/>
</dbReference>
<dbReference type="RefSeq" id="YP_247619.1">
    <property type="nucleotide sequence ID" value="NC_007144.1"/>
</dbReference>
<dbReference type="SMR" id="Q2QD69"/>
<dbReference type="GeneID" id="3429274"/>
<dbReference type="KEGG" id="csv:3429274"/>
<dbReference type="OrthoDB" id="10443176at2759"/>
<dbReference type="GO" id="GO:0009535">
    <property type="term" value="C:chloroplast thylakoid membrane"/>
    <property type="evidence" value="ECO:0007669"/>
    <property type="project" value="UniProtKB-SubCell"/>
</dbReference>
<dbReference type="GO" id="GO:0009522">
    <property type="term" value="C:photosystem I"/>
    <property type="evidence" value="ECO:0007669"/>
    <property type="project" value="UniProtKB-KW"/>
</dbReference>
<dbReference type="GO" id="GO:0015979">
    <property type="term" value="P:photosynthesis"/>
    <property type="evidence" value="ECO:0007669"/>
    <property type="project" value="UniProtKB-UniRule"/>
</dbReference>
<dbReference type="FunFam" id="1.20.5.510:FF:000001">
    <property type="entry name" value="Photosystem I reaction center subunit IX"/>
    <property type="match status" value="1"/>
</dbReference>
<dbReference type="Gene3D" id="1.20.5.510">
    <property type="entry name" value="Single helix bin"/>
    <property type="match status" value="1"/>
</dbReference>
<dbReference type="HAMAP" id="MF_00522">
    <property type="entry name" value="PSI_PsaJ"/>
    <property type="match status" value="1"/>
</dbReference>
<dbReference type="InterPro" id="IPR002615">
    <property type="entry name" value="PSI_PsaJ"/>
</dbReference>
<dbReference type="InterPro" id="IPR036062">
    <property type="entry name" value="PSI_PsaJ_sf"/>
</dbReference>
<dbReference type="PANTHER" id="PTHR36082">
    <property type="match status" value="1"/>
</dbReference>
<dbReference type="PANTHER" id="PTHR36082:SF2">
    <property type="entry name" value="PHOTOSYSTEM I REACTION CENTER SUBUNIT IX"/>
    <property type="match status" value="1"/>
</dbReference>
<dbReference type="Pfam" id="PF01701">
    <property type="entry name" value="PSI_PsaJ"/>
    <property type="match status" value="1"/>
</dbReference>
<dbReference type="SUPFAM" id="SSF81544">
    <property type="entry name" value="Subunit IX of photosystem I reaction centre, PsaJ"/>
    <property type="match status" value="1"/>
</dbReference>
<organism>
    <name type="scientific">Cucumis sativus</name>
    <name type="common">Cucumber</name>
    <dbReference type="NCBI Taxonomy" id="3659"/>
    <lineage>
        <taxon>Eukaryota</taxon>
        <taxon>Viridiplantae</taxon>
        <taxon>Streptophyta</taxon>
        <taxon>Embryophyta</taxon>
        <taxon>Tracheophyta</taxon>
        <taxon>Spermatophyta</taxon>
        <taxon>Magnoliopsida</taxon>
        <taxon>eudicotyledons</taxon>
        <taxon>Gunneridae</taxon>
        <taxon>Pentapetalae</taxon>
        <taxon>rosids</taxon>
        <taxon>fabids</taxon>
        <taxon>Cucurbitales</taxon>
        <taxon>Cucurbitaceae</taxon>
        <taxon>Benincaseae</taxon>
        <taxon>Cucumis</taxon>
    </lineage>
</organism>